<reference key="1">
    <citation type="submission" date="2007-08" db="EMBL/GenBank/DDBJ databases">
        <title>Complete sequence of Shewanella sediminis HAW-EB3.</title>
        <authorList>
            <consortium name="US DOE Joint Genome Institute"/>
            <person name="Copeland A."/>
            <person name="Lucas S."/>
            <person name="Lapidus A."/>
            <person name="Barry K."/>
            <person name="Glavina del Rio T."/>
            <person name="Dalin E."/>
            <person name="Tice H."/>
            <person name="Pitluck S."/>
            <person name="Chertkov O."/>
            <person name="Brettin T."/>
            <person name="Bruce D."/>
            <person name="Detter J.C."/>
            <person name="Han C."/>
            <person name="Schmutz J."/>
            <person name="Larimer F."/>
            <person name="Land M."/>
            <person name="Hauser L."/>
            <person name="Kyrpides N."/>
            <person name="Kim E."/>
            <person name="Zhao J.-S."/>
            <person name="Richardson P."/>
        </authorList>
    </citation>
    <scope>NUCLEOTIDE SEQUENCE [LARGE SCALE GENOMIC DNA]</scope>
    <source>
        <strain>HAW-EB3</strain>
    </source>
</reference>
<sequence length="424" mass="44741">MIENNAAYLQTLGQQAKQASYALAGLTGQQKQALLSAIAGSLTKNSATILAANAKDVVAARSNGLNDAMIDRLLLDESRLQGVIGDIDNVINLTDPVGTELESQVLDNGLRLSRRRVPLGVIGVIYEARPNVTVDIAVLALKTGNAVILRGGKETLQSNLALSEAIRAAVVEQGLPADSVQLIQSPDRALVSGLLKLDQFVDMIVPRGGQNLQRLCAEQATIPVILGGIGICHLYADKDADIAKSIAVIANAKVQRPTVCNALDTVLVHEAIADQLLPQLYTHLAASGVTFYGCQSAQAIADKLGVAISIATEETYGQEWLSLTLGVKVVSDIDTAIDHIRTYSSGHSEGILTDSIHASAHFVNEVDSAAVYVNASTRFTDGGQFGLGAEVAVSTQKLHARGPMGLEALTTYKWIGVGEYTARS</sequence>
<dbReference type="EC" id="1.2.1.41" evidence="1"/>
<dbReference type="EMBL" id="CP000821">
    <property type="protein sequence ID" value="ABV38019.1"/>
    <property type="molecule type" value="Genomic_DNA"/>
</dbReference>
<dbReference type="RefSeq" id="WP_012143749.1">
    <property type="nucleotide sequence ID" value="NC_009831.1"/>
</dbReference>
<dbReference type="SMR" id="A8FYU6"/>
<dbReference type="STRING" id="425104.Ssed_3415"/>
<dbReference type="KEGG" id="sse:Ssed_3415"/>
<dbReference type="eggNOG" id="COG0014">
    <property type="taxonomic scope" value="Bacteria"/>
</dbReference>
<dbReference type="HOGENOM" id="CLU_030231_0_0_6"/>
<dbReference type="OrthoDB" id="9809970at2"/>
<dbReference type="UniPathway" id="UPA00098">
    <property type="reaction ID" value="UER00360"/>
</dbReference>
<dbReference type="Proteomes" id="UP000002015">
    <property type="component" value="Chromosome"/>
</dbReference>
<dbReference type="GO" id="GO:0005737">
    <property type="term" value="C:cytoplasm"/>
    <property type="evidence" value="ECO:0007669"/>
    <property type="project" value="UniProtKB-SubCell"/>
</dbReference>
<dbReference type="GO" id="GO:0004350">
    <property type="term" value="F:glutamate-5-semialdehyde dehydrogenase activity"/>
    <property type="evidence" value="ECO:0007669"/>
    <property type="project" value="UniProtKB-UniRule"/>
</dbReference>
<dbReference type="GO" id="GO:0050661">
    <property type="term" value="F:NADP binding"/>
    <property type="evidence" value="ECO:0007669"/>
    <property type="project" value="InterPro"/>
</dbReference>
<dbReference type="GO" id="GO:0055129">
    <property type="term" value="P:L-proline biosynthetic process"/>
    <property type="evidence" value="ECO:0007669"/>
    <property type="project" value="UniProtKB-UniRule"/>
</dbReference>
<dbReference type="CDD" id="cd07079">
    <property type="entry name" value="ALDH_F18-19_ProA-GPR"/>
    <property type="match status" value="1"/>
</dbReference>
<dbReference type="FunFam" id="3.40.309.10:FF:000006">
    <property type="entry name" value="Gamma-glutamyl phosphate reductase"/>
    <property type="match status" value="1"/>
</dbReference>
<dbReference type="Gene3D" id="3.40.605.10">
    <property type="entry name" value="Aldehyde Dehydrogenase, Chain A, domain 1"/>
    <property type="match status" value="1"/>
</dbReference>
<dbReference type="Gene3D" id="3.40.309.10">
    <property type="entry name" value="Aldehyde Dehydrogenase, Chain A, domain 2"/>
    <property type="match status" value="1"/>
</dbReference>
<dbReference type="HAMAP" id="MF_00412">
    <property type="entry name" value="ProA"/>
    <property type="match status" value="1"/>
</dbReference>
<dbReference type="InterPro" id="IPR016161">
    <property type="entry name" value="Ald_DH/histidinol_DH"/>
</dbReference>
<dbReference type="InterPro" id="IPR016163">
    <property type="entry name" value="Ald_DH_C"/>
</dbReference>
<dbReference type="InterPro" id="IPR016162">
    <property type="entry name" value="Ald_DH_N"/>
</dbReference>
<dbReference type="InterPro" id="IPR015590">
    <property type="entry name" value="Aldehyde_DH_dom"/>
</dbReference>
<dbReference type="InterPro" id="IPR020593">
    <property type="entry name" value="G-glutamylP_reductase_CS"/>
</dbReference>
<dbReference type="InterPro" id="IPR012134">
    <property type="entry name" value="Glu-5-SA_DH"/>
</dbReference>
<dbReference type="InterPro" id="IPR000965">
    <property type="entry name" value="GPR_dom"/>
</dbReference>
<dbReference type="NCBIfam" id="NF001221">
    <property type="entry name" value="PRK00197.1"/>
    <property type="match status" value="1"/>
</dbReference>
<dbReference type="NCBIfam" id="TIGR00407">
    <property type="entry name" value="proA"/>
    <property type="match status" value="1"/>
</dbReference>
<dbReference type="PANTHER" id="PTHR11063:SF8">
    <property type="entry name" value="DELTA-1-PYRROLINE-5-CARBOXYLATE SYNTHASE"/>
    <property type="match status" value="1"/>
</dbReference>
<dbReference type="PANTHER" id="PTHR11063">
    <property type="entry name" value="GLUTAMATE SEMIALDEHYDE DEHYDROGENASE"/>
    <property type="match status" value="1"/>
</dbReference>
<dbReference type="Pfam" id="PF00171">
    <property type="entry name" value="Aldedh"/>
    <property type="match status" value="1"/>
</dbReference>
<dbReference type="PIRSF" id="PIRSF000151">
    <property type="entry name" value="GPR"/>
    <property type="match status" value="1"/>
</dbReference>
<dbReference type="SUPFAM" id="SSF53720">
    <property type="entry name" value="ALDH-like"/>
    <property type="match status" value="1"/>
</dbReference>
<dbReference type="PROSITE" id="PS01223">
    <property type="entry name" value="PROA"/>
    <property type="match status" value="1"/>
</dbReference>
<evidence type="ECO:0000255" key="1">
    <source>
        <dbReference type="HAMAP-Rule" id="MF_00412"/>
    </source>
</evidence>
<comment type="function">
    <text evidence="1">Catalyzes the NADPH-dependent reduction of L-glutamate 5-phosphate into L-glutamate 5-semialdehyde and phosphate. The product spontaneously undergoes cyclization to form 1-pyrroline-5-carboxylate.</text>
</comment>
<comment type="catalytic activity">
    <reaction evidence="1">
        <text>L-glutamate 5-semialdehyde + phosphate + NADP(+) = L-glutamyl 5-phosphate + NADPH + H(+)</text>
        <dbReference type="Rhea" id="RHEA:19541"/>
        <dbReference type="ChEBI" id="CHEBI:15378"/>
        <dbReference type="ChEBI" id="CHEBI:43474"/>
        <dbReference type="ChEBI" id="CHEBI:57783"/>
        <dbReference type="ChEBI" id="CHEBI:58066"/>
        <dbReference type="ChEBI" id="CHEBI:58274"/>
        <dbReference type="ChEBI" id="CHEBI:58349"/>
        <dbReference type="EC" id="1.2.1.41"/>
    </reaction>
</comment>
<comment type="pathway">
    <text evidence="1">Amino-acid biosynthesis; L-proline biosynthesis; L-glutamate 5-semialdehyde from L-glutamate: step 2/2.</text>
</comment>
<comment type="subcellular location">
    <subcellularLocation>
        <location evidence="1">Cytoplasm</location>
    </subcellularLocation>
</comment>
<comment type="similarity">
    <text evidence="1">Belongs to the gamma-glutamyl phosphate reductase family.</text>
</comment>
<organism>
    <name type="scientific">Shewanella sediminis (strain HAW-EB3)</name>
    <dbReference type="NCBI Taxonomy" id="425104"/>
    <lineage>
        <taxon>Bacteria</taxon>
        <taxon>Pseudomonadati</taxon>
        <taxon>Pseudomonadota</taxon>
        <taxon>Gammaproteobacteria</taxon>
        <taxon>Alteromonadales</taxon>
        <taxon>Shewanellaceae</taxon>
        <taxon>Shewanella</taxon>
    </lineage>
</organism>
<feature type="chain" id="PRO_0000340918" description="Gamma-glutamyl phosphate reductase">
    <location>
        <begin position="1"/>
        <end position="424"/>
    </location>
</feature>
<proteinExistence type="inferred from homology"/>
<name>PROA_SHESH</name>
<gene>
    <name evidence="1" type="primary">proA</name>
    <name type="ordered locus">Ssed_3415</name>
</gene>
<keyword id="KW-0028">Amino-acid biosynthesis</keyword>
<keyword id="KW-0963">Cytoplasm</keyword>
<keyword id="KW-0521">NADP</keyword>
<keyword id="KW-0560">Oxidoreductase</keyword>
<keyword id="KW-0641">Proline biosynthesis</keyword>
<keyword id="KW-1185">Reference proteome</keyword>
<protein>
    <recommendedName>
        <fullName evidence="1">Gamma-glutamyl phosphate reductase</fullName>
        <shortName evidence="1">GPR</shortName>
        <ecNumber evidence="1">1.2.1.41</ecNumber>
    </recommendedName>
    <alternativeName>
        <fullName evidence="1">Glutamate-5-semialdehyde dehydrogenase</fullName>
    </alternativeName>
    <alternativeName>
        <fullName evidence="1">Glutamyl-gamma-semialdehyde dehydrogenase</fullName>
        <shortName evidence="1">GSA dehydrogenase</shortName>
    </alternativeName>
</protein>
<accession>A8FYU6</accession>